<feature type="chain" id="PRO_0000172420" description="Large ribosomal subunit protein bL32">
    <location>
        <begin position="1"/>
        <end position="60"/>
    </location>
</feature>
<feature type="region of interest" description="Disordered" evidence="2">
    <location>
        <begin position="1"/>
        <end position="22"/>
    </location>
</feature>
<feature type="compositionally biased region" description="Basic residues" evidence="2">
    <location>
        <begin position="7"/>
        <end position="20"/>
    </location>
</feature>
<reference key="1">
    <citation type="journal article" date="2002" name="Proc. Natl. Acad. Sci. U.S.A.">
        <title>Genome sequence and comparative microarray analysis of serotype M18 group A Streptococcus strains associated with acute rheumatic fever outbreaks.</title>
        <authorList>
            <person name="Smoot J.C."/>
            <person name="Barbian K.D."/>
            <person name="Van Gompel J.J."/>
            <person name="Smoot L.M."/>
            <person name="Chaussee M.S."/>
            <person name="Sylva G.L."/>
            <person name="Sturdevant D.E."/>
            <person name="Ricklefs S.M."/>
            <person name="Porcella S.F."/>
            <person name="Parkins L.D."/>
            <person name="Beres S.B."/>
            <person name="Campbell D.S."/>
            <person name="Smith T.M."/>
            <person name="Zhang Q."/>
            <person name="Kapur V."/>
            <person name="Daly J.A."/>
            <person name="Veasy L.G."/>
            <person name="Musser J.M."/>
        </authorList>
    </citation>
    <scope>NUCLEOTIDE SEQUENCE [LARGE SCALE GENOMIC DNA]</scope>
    <source>
        <strain>MGAS8232</strain>
    </source>
</reference>
<sequence length="60" mass="6865">MAVPARHTSKAKKNKRRTHYKLTAPSVQFDETTGDYSRSHRVSLKGYYKGRKIAKANEAK</sequence>
<name>RL32_STRP8</name>
<accession>P66213</accession>
<accession>Q8NZ17</accession>
<dbReference type="EMBL" id="AE009949">
    <property type="protein sequence ID" value="AAL98635.1"/>
    <property type="molecule type" value="Genomic_DNA"/>
</dbReference>
<dbReference type="RefSeq" id="WP_000290414.1">
    <property type="nucleotide sequence ID" value="NC_003485.1"/>
</dbReference>
<dbReference type="SMR" id="P66213"/>
<dbReference type="GeneID" id="83689722"/>
<dbReference type="KEGG" id="spm:spyM18_2196"/>
<dbReference type="HOGENOM" id="CLU_129084_2_3_9"/>
<dbReference type="GO" id="GO:0015934">
    <property type="term" value="C:large ribosomal subunit"/>
    <property type="evidence" value="ECO:0007669"/>
    <property type="project" value="InterPro"/>
</dbReference>
<dbReference type="GO" id="GO:0003735">
    <property type="term" value="F:structural constituent of ribosome"/>
    <property type="evidence" value="ECO:0007669"/>
    <property type="project" value="InterPro"/>
</dbReference>
<dbReference type="GO" id="GO:0006412">
    <property type="term" value="P:translation"/>
    <property type="evidence" value="ECO:0007669"/>
    <property type="project" value="UniProtKB-UniRule"/>
</dbReference>
<dbReference type="HAMAP" id="MF_00340">
    <property type="entry name" value="Ribosomal_bL32"/>
    <property type="match status" value="1"/>
</dbReference>
<dbReference type="InterPro" id="IPR002677">
    <property type="entry name" value="Ribosomal_bL32"/>
</dbReference>
<dbReference type="InterPro" id="IPR044957">
    <property type="entry name" value="Ribosomal_bL32_bact"/>
</dbReference>
<dbReference type="InterPro" id="IPR011332">
    <property type="entry name" value="Ribosomal_zn-bd"/>
</dbReference>
<dbReference type="NCBIfam" id="TIGR01031">
    <property type="entry name" value="rpmF_bact"/>
    <property type="match status" value="1"/>
</dbReference>
<dbReference type="PANTHER" id="PTHR35534">
    <property type="entry name" value="50S RIBOSOMAL PROTEIN L32"/>
    <property type="match status" value="1"/>
</dbReference>
<dbReference type="PANTHER" id="PTHR35534:SF1">
    <property type="entry name" value="LARGE RIBOSOMAL SUBUNIT PROTEIN BL32"/>
    <property type="match status" value="1"/>
</dbReference>
<dbReference type="Pfam" id="PF01783">
    <property type="entry name" value="Ribosomal_L32p"/>
    <property type="match status" value="1"/>
</dbReference>
<dbReference type="SUPFAM" id="SSF57829">
    <property type="entry name" value="Zn-binding ribosomal proteins"/>
    <property type="match status" value="1"/>
</dbReference>
<organism>
    <name type="scientific">Streptococcus pyogenes serotype M18 (strain MGAS8232)</name>
    <dbReference type="NCBI Taxonomy" id="186103"/>
    <lineage>
        <taxon>Bacteria</taxon>
        <taxon>Bacillati</taxon>
        <taxon>Bacillota</taxon>
        <taxon>Bacilli</taxon>
        <taxon>Lactobacillales</taxon>
        <taxon>Streptococcaceae</taxon>
        <taxon>Streptococcus</taxon>
    </lineage>
</organism>
<proteinExistence type="inferred from homology"/>
<comment type="similarity">
    <text evidence="1">Belongs to the bacterial ribosomal protein bL32 family.</text>
</comment>
<evidence type="ECO:0000255" key="1">
    <source>
        <dbReference type="HAMAP-Rule" id="MF_00340"/>
    </source>
</evidence>
<evidence type="ECO:0000256" key="2">
    <source>
        <dbReference type="SAM" id="MobiDB-lite"/>
    </source>
</evidence>
<evidence type="ECO:0000305" key="3"/>
<protein>
    <recommendedName>
        <fullName evidence="1">Large ribosomal subunit protein bL32</fullName>
    </recommendedName>
    <alternativeName>
        <fullName evidence="3">50S ribosomal protein L32</fullName>
    </alternativeName>
</protein>
<gene>
    <name evidence="1" type="primary">rpmF</name>
    <name type="ordered locus">spyM18_2196</name>
</gene>
<keyword id="KW-0687">Ribonucleoprotein</keyword>
<keyword id="KW-0689">Ribosomal protein</keyword>